<sequence length="271" mass="31539">MVLIKEFRVVLPCSVQEYQVGQLYSVAEASKNETGGGEGIEVLKNEPYEKDGEKGQYTHKIYHLKSKVPAFVRMIAPEGSLVFHEKAWNAYPYCRTIVTNEYMKDDFFIKIETWHKPDLGTLENVHGLDPNTWKTVEIVHIDIADRSQVEPADYKADEDPALFQSVKTKRGPLGPNWKKELANNPDCPQMCAYKLVTIKFKWWGLQSKVENFIQKQEKRIFTNFHRQLFCWIDKWIDLTMEDIRRMEDETQKELETMRKKGSVRGTSAADV</sequence>
<gene>
    <name type="primary">PITPNB</name>
</gene>
<accession>Q9TR36</accession>
<accession>A0JN44</accession>
<feature type="initiator methionine" description="Removed" evidence="4">
    <location>
        <position position="1"/>
    </location>
</feature>
<feature type="chain" id="PRO_0000269201" description="Phosphatidylinositol transfer protein beta isoform">
    <location>
        <begin position="2"/>
        <end position="271"/>
    </location>
</feature>
<feature type="modified residue" description="N6-acetyllysine" evidence="1">
    <location>
        <position position="215"/>
    </location>
</feature>
<feature type="modified residue" description="Phosphoserine" evidence="2">
    <location>
        <position position="262"/>
    </location>
</feature>
<dbReference type="EMBL" id="BC126510">
    <property type="protein sequence ID" value="AAI26511.1"/>
    <property type="molecule type" value="mRNA"/>
</dbReference>
<dbReference type="RefSeq" id="NP_001071508.1">
    <property type="nucleotide sequence ID" value="NM_001078040.1"/>
</dbReference>
<dbReference type="SMR" id="Q9TR36"/>
<dbReference type="FunCoup" id="Q9TR36">
    <property type="interactions" value="3537"/>
</dbReference>
<dbReference type="STRING" id="9913.ENSBTAP00000048516"/>
<dbReference type="SwissLipids" id="SLP:000000989"/>
<dbReference type="PaxDb" id="9913-ENSBTAP00000048516"/>
<dbReference type="Ensembl" id="ENSBTAT00000051852.4">
    <property type="protein sequence ID" value="ENSBTAP00000048516.3"/>
    <property type="gene ID" value="ENSBTAG00000017799.7"/>
</dbReference>
<dbReference type="GeneID" id="613773"/>
<dbReference type="KEGG" id="bta:613773"/>
<dbReference type="CTD" id="23760"/>
<dbReference type="VEuPathDB" id="HostDB:ENSBTAG00000017799"/>
<dbReference type="VGNC" id="VGNC:32920">
    <property type="gene designation" value="PITPNB"/>
</dbReference>
<dbReference type="eggNOG" id="KOG3668">
    <property type="taxonomic scope" value="Eukaryota"/>
</dbReference>
<dbReference type="GeneTree" id="ENSGT00940000155101"/>
<dbReference type="HOGENOM" id="CLU_046509_0_0_1"/>
<dbReference type="InParanoid" id="Q9TR36"/>
<dbReference type="OMA" id="NELKPDC"/>
<dbReference type="OrthoDB" id="18453at2759"/>
<dbReference type="TreeFam" id="TF313279"/>
<dbReference type="Reactome" id="R-BTA-1483196">
    <property type="pathway name" value="PI and PC transport between ER and Golgi membranes"/>
</dbReference>
<dbReference type="Proteomes" id="UP000009136">
    <property type="component" value="Chromosome 17"/>
</dbReference>
<dbReference type="Bgee" id="ENSBTAG00000017799">
    <property type="expression patterns" value="Expressed in ruminant reticulum and 108 other cell types or tissues"/>
</dbReference>
<dbReference type="GO" id="GO:0005737">
    <property type="term" value="C:cytoplasm"/>
    <property type="evidence" value="ECO:0000318"/>
    <property type="project" value="GO_Central"/>
</dbReference>
<dbReference type="GO" id="GO:0005789">
    <property type="term" value="C:endoplasmic reticulum membrane"/>
    <property type="evidence" value="ECO:0000250"/>
    <property type="project" value="UniProtKB"/>
</dbReference>
<dbReference type="GO" id="GO:0005794">
    <property type="term" value="C:Golgi apparatus"/>
    <property type="evidence" value="ECO:0000250"/>
    <property type="project" value="UniProtKB"/>
</dbReference>
<dbReference type="GO" id="GO:0000139">
    <property type="term" value="C:Golgi membrane"/>
    <property type="evidence" value="ECO:0000250"/>
    <property type="project" value="UniProtKB"/>
</dbReference>
<dbReference type="GO" id="GO:0031210">
    <property type="term" value="F:phosphatidylcholine binding"/>
    <property type="evidence" value="ECO:0000318"/>
    <property type="project" value="GO_Central"/>
</dbReference>
<dbReference type="GO" id="GO:0120019">
    <property type="term" value="F:phosphatidylcholine transfer activity"/>
    <property type="evidence" value="ECO:0000314"/>
    <property type="project" value="UniProtKB"/>
</dbReference>
<dbReference type="GO" id="GO:0008525">
    <property type="term" value="F:phosphatidylcholine transporter activity"/>
    <property type="evidence" value="ECO:0000318"/>
    <property type="project" value="GO_Central"/>
</dbReference>
<dbReference type="GO" id="GO:0035091">
    <property type="term" value="F:phosphatidylinositol binding"/>
    <property type="evidence" value="ECO:0000318"/>
    <property type="project" value="GO_Central"/>
</dbReference>
<dbReference type="GO" id="GO:0008526">
    <property type="term" value="F:phosphatidylinositol transfer activity"/>
    <property type="evidence" value="ECO:0000314"/>
    <property type="project" value="UniProtKB"/>
</dbReference>
<dbReference type="GO" id="GO:0140338">
    <property type="term" value="F:sphingomyelin transfer activity"/>
    <property type="evidence" value="ECO:0000314"/>
    <property type="project" value="UniProtKB"/>
</dbReference>
<dbReference type="GO" id="GO:0006890">
    <property type="term" value="P:retrograde vesicle-mediated transport, Golgi to endoplasmic reticulum"/>
    <property type="evidence" value="ECO:0000250"/>
    <property type="project" value="UniProtKB"/>
</dbReference>
<dbReference type="CDD" id="cd08888">
    <property type="entry name" value="SRPBCC_PITPNA-B_like"/>
    <property type="match status" value="1"/>
</dbReference>
<dbReference type="FunFam" id="3.30.530.20:FF:000004">
    <property type="entry name" value="Phosphatidylinositol transfer protein alpha isoform"/>
    <property type="match status" value="1"/>
</dbReference>
<dbReference type="Gene3D" id="3.30.530.20">
    <property type="match status" value="1"/>
</dbReference>
<dbReference type="InterPro" id="IPR001666">
    <property type="entry name" value="PI_transfer"/>
</dbReference>
<dbReference type="InterPro" id="IPR055261">
    <property type="entry name" value="PI_transfer_N"/>
</dbReference>
<dbReference type="InterPro" id="IPR023393">
    <property type="entry name" value="START-like_dom_sf"/>
</dbReference>
<dbReference type="PANTHER" id="PTHR10658">
    <property type="entry name" value="PHOSPHATIDYLINOSITOL TRANSFER PROTEIN"/>
    <property type="match status" value="1"/>
</dbReference>
<dbReference type="PANTHER" id="PTHR10658:SF27">
    <property type="entry name" value="PHOSPHATIDYLINOSITOL TRANSFER PROTEIN BETA ISOFORM"/>
    <property type="match status" value="1"/>
</dbReference>
<dbReference type="Pfam" id="PF02121">
    <property type="entry name" value="IP_trans"/>
    <property type="match status" value="1"/>
</dbReference>
<dbReference type="PRINTS" id="PR00391">
    <property type="entry name" value="PITRANSFER"/>
</dbReference>
<dbReference type="SUPFAM" id="SSF55961">
    <property type="entry name" value="Bet v1-like"/>
    <property type="match status" value="1"/>
</dbReference>
<keyword id="KW-0007">Acetylation</keyword>
<keyword id="KW-0903">Direct protein sequencing</keyword>
<keyword id="KW-0256">Endoplasmic reticulum</keyword>
<keyword id="KW-0333">Golgi apparatus</keyword>
<keyword id="KW-0445">Lipid transport</keyword>
<keyword id="KW-0446">Lipid-binding</keyword>
<keyword id="KW-0472">Membrane</keyword>
<keyword id="KW-0597">Phosphoprotein</keyword>
<keyword id="KW-1185">Reference proteome</keyword>
<keyword id="KW-0813">Transport</keyword>
<name>PIPNB_BOVIN</name>
<evidence type="ECO:0000250" key="1">
    <source>
        <dbReference type="UniProtKB" id="P48739"/>
    </source>
</evidence>
<evidence type="ECO:0000250" key="2">
    <source>
        <dbReference type="UniProtKB" id="P53811"/>
    </source>
</evidence>
<evidence type="ECO:0000250" key="3">
    <source>
        <dbReference type="UniProtKB" id="P53812"/>
    </source>
</evidence>
<evidence type="ECO:0000269" key="4">
    <source>
    </source>
</evidence>
<evidence type="ECO:0000305" key="5"/>
<evidence type="ECO:0000305" key="6">
    <source>
    </source>
</evidence>
<organism>
    <name type="scientific">Bos taurus</name>
    <name type="common">Bovine</name>
    <dbReference type="NCBI Taxonomy" id="9913"/>
    <lineage>
        <taxon>Eukaryota</taxon>
        <taxon>Metazoa</taxon>
        <taxon>Chordata</taxon>
        <taxon>Craniata</taxon>
        <taxon>Vertebrata</taxon>
        <taxon>Euteleostomi</taxon>
        <taxon>Mammalia</taxon>
        <taxon>Eutheria</taxon>
        <taxon>Laurasiatheria</taxon>
        <taxon>Artiodactyla</taxon>
        <taxon>Ruminantia</taxon>
        <taxon>Pecora</taxon>
        <taxon>Bovidae</taxon>
        <taxon>Bovinae</taxon>
        <taxon>Bos</taxon>
    </lineage>
</organism>
<proteinExistence type="evidence at protein level"/>
<comment type="function">
    <text evidence="1 4">Catalyzes the transfer of phosphatidylinositol, phosphatidylcholine and sphingomyelin between membranes (PubMed:7654206). Required for COPI-mediated retrograde transport from the Golgi to the endoplasmic reticulum; phosphatidylinositol and phosphatidylcholine transfer activity is essential for this function (By similarity).</text>
</comment>
<comment type="catalytic activity">
    <reaction evidence="4">
        <text>a 1,2-diacyl-sn-glycero-3-phosphocholine(in) = a 1,2-diacyl-sn-glycero-3-phosphocholine(out)</text>
        <dbReference type="Rhea" id="RHEA:38571"/>
        <dbReference type="ChEBI" id="CHEBI:57643"/>
    </reaction>
    <physiologicalReaction direction="left-to-right" evidence="6">
        <dbReference type="Rhea" id="RHEA:38572"/>
    </physiologicalReaction>
</comment>
<comment type="catalytic activity">
    <reaction evidence="4">
        <text>a 1,2-diacyl-sn-glycero-3-phospho-(1D-myo-inositol)(in) = a 1,2-diacyl-sn-glycero-3-phospho-(1D-myo-inositol)(out)</text>
        <dbReference type="Rhea" id="RHEA:38691"/>
        <dbReference type="ChEBI" id="CHEBI:57880"/>
    </reaction>
    <physiologicalReaction direction="left-to-right" evidence="6">
        <dbReference type="Rhea" id="RHEA:38692"/>
    </physiologicalReaction>
</comment>
<comment type="catalytic activity">
    <reaction evidence="4">
        <text>an N-(acyl)-sphingosylphosphocholine(in) = an N-(acyl)-sphingosylphosphocholine(out)</text>
        <dbReference type="Rhea" id="RHEA:43776"/>
        <dbReference type="ChEBI" id="CHEBI:64583"/>
    </reaction>
    <physiologicalReaction direction="left-to-right" evidence="6">
        <dbReference type="Rhea" id="RHEA:43777"/>
    </physiologicalReaction>
</comment>
<comment type="subcellular location">
    <subcellularLocation>
        <location evidence="2">Golgi apparatus</location>
    </subcellularLocation>
    <subcellularLocation>
        <location evidence="3">Golgi apparatus membrane</location>
    </subcellularLocation>
    <subcellularLocation>
        <location evidence="3">Endoplasmic reticulum membrane</location>
    </subcellularLocation>
</comment>
<comment type="PTM">
    <text evidence="2">Constitutive phosphorylation of Ser-262 has no effect on phospholipid transfer activity but is required for Golgi targeting.</text>
</comment>
<comment type="similarity">
    <text evidence="5">Belongs to the PtdIns transfer protein family. PI transfer class I subfamily.</text>
</comment>
<protein>
    <recommendedName>
        <fullName>Phosphatidylinositol transfer protein beta isoform</fullName>
        <shortName>PI-TP-beta</shortName>
        <shortName>PtdIns transfer protein beta</shortName>
        <shortName>PtdInsTP beta</shortName>
    </recommendedName>
    <alternativeName>
        <fullName>Phosphatidylinositol-transfer protein 36 kDa isoform</fullName>
        <shortName>PI-TP 36 kda isoform</shortName>
    </alternativeName>
</protein>
<reference key="1">
    <citation type="submission" date="2006-10" db="EMBL/GenBank/DDBJ databases">
        <authorList>
            <consortium name="NIH - Mammalian Gene Collection (MGC) project"/>
        </authorList>
    </citation>
    <scope>NUCLEOTIDE SEQUENCE [LARGE SCALE MRNA]</scope>
    <source>
        <strain>Hereford</strain>
        <tissue>Brain cortex</tissue>
    </source>
</reference>
<reference key="2">
    <citation type="journal article" date="1995" name="Biochem. J.">
        <title>An isoform of the phosphatidylinositol-transfer protein transfers sphingomyelin and is associated with the Golgi system.</title>
        <authorList>
            <person name="de Vries K.J."/>
            <person name="Heinrichs A.A."/>
            <person name="Cunningham E."/>
            <person name="Brunink F."/>
            <person name="Westerman J."/>
            <person name="Somerharju P.J."/>
            <person name="Cockcroft S."/>
            <person name="Wirtz K.W."/>
            <person name="Snoek G.T."/>
        </authorList>
    </citation>
    <scope>PROTEIN SEQUENCE OF 2-22</scope>
    <scope>FUNCTION</scope>
    <scope>CATALYTIC ACTIVITY</scope>
    <source>
        <tissue>Brain</tissue>
    </source>
</reference>